<name>LPTD_PSET1</name>
<dbReference type="EMBL" id="CR954246">
    <property type="protein sequence ID" value="CAI87680.1"/>
    <property type="status" value="ALT_INIT"/>
    <property type="molecule type" value="Genomic_DNA"/>
</dbReference>
<dbReference type="SMR" id="Q3IFD4"/>
<dbReference type="STRING" id="326442.PSHAa2632"/>
<dbReference type="KEGG" id="pha:PSHAa2632"/>
<dbReference type="eggNOG" id="COG1452">
    <property type="taxonomic scope" value="Bacteria"/>
</dbReference>
<dbReference type="HOGENOM" id="CLU_009039_0_0_6"/>
<dbReference type="BioCyc" id="PHAL326442:PSHA_RS12955-MONOMER"/>
<dbReference type="Proteomes" id="UP000006843">
    <property type="component" value="Chromosome I"/>
</dbReference>
<dbReference type="GO" id="GO:0009279">
    <property type="term" value="C:cell outer membrane"/>
    <property type="evidence" value="ECO:0007669"/>
    <property type="project" value="UniProtKB-SubCell"/>
</dbReference>
<dbReference type="GO" id="GO:1990351">
    <property type="term" value="C:transporter complex"/>
    <property type="evidence" value="ECO:0007669"/>
    <property type="project" value="TreeGrafter"/>
</dbReference>
<dbReference type="GO" id="GO:0043165">
    <property type="term" value="P:Gram-negative-bacterium-type cell outer membrane assembly"/>
    <property type="evidence" value="ECO:0007669"/>
    <property type="project" value="UniProtKB-UniRule"/>
</dbReference>
<dbReference type="GO" id="GO:0015920">
    <property type="term" value="P:lipopolysaccharide transport"/>
    <property type="evidence" value="ECO:0007669"/>
    <property type="project" value="InterPro"/>
</dbReference>
<dbReference type="HAMAP" id="MF_01411">
    <property type="entry name" value="LPS_assembly_LptD"/>
    <property type="match status" value="1"/>
</dbReference>
<dbReference type="InterPro" id="IPR020889">
    <property type="entry name" value="LipoPS_assembly_LptD"/>
</dbReference>
<dbReference type="InterPro" id="IPR050218">
    <property type="entry name" value="LptD"/>
</dbReference>
<dbReference type="InterPro" id="IPR007543">
    <property type="entry name" value="LptD_C"/>
</dbReference>
<dbReference type="InterPro" id="IPR005653">
    <property type="entry name" value="OstA-like_N"/>
</dbReference>
<dbReference type="PANTHER" id="PTHR30189">
    <property type="entry name" value="LPS-ASSEMBLY PROTEIN"/>
    <property type="match status" value="1"/>
</dbReference>
<dbReference type="PANTHER" id="PTHR30189:SF1">
    <property type="entry name" value="LPS-ASSEMBLY PROTEIN LPTD"/>
    <property type="match status" value="1"/>
</dbReference>
<dbReference type="Pfam" id="PF04453">
    <property type="entry name" value="LptD"/>
    <property type="match status" value="1"/>
</dbReference>
<dbReference type="Pfam" id="PF03968">
    <property type="entry name" value="LptD_N"/>
    <property type="match status" value="1"/>
</dbReference>
<gene>
    <name evidence="1" type="primary">lptD</name>
    <name type="synonym">imp</name>
    <name type="synonym">ostA</name>
    <name type="ordered locus">PSHAa2632</name>
</gene>
<accession>Q3IFD4</accession>
<proteinExistence type="inferred from homology"/>
<organism>
    <name type="scientific">Pseudoalteromonas translucida (strain TAC 125)</name>
    <dbReference type="NCBI Taxonomy" id="326442"/>
    <lineage>
        <taxon>Bacteria</taxon>
        <taxon>Pseudomonadati</taxon>
        <taxon>Pseudomonadota</taxon>
        <taxon>Gammaproteobacteria</taxon>
        <taxon>Alteromonadales</taxon>
        <taxon>Pseudoalteromonadaceae</taxon>
        <taxon>Pseudoalteromonas</taxon>
    </lineage>
</organism>
<protein>
    <recommendedName>
        <fullName evidence="1">LPS-assembly protein LptD</fullName>
    </recommendedName>
</protein>
<feature type="signal peptide" evidence="1">
    <location>
        <begin position="1"/>
        <end position="19"/>
    </location>
</feature>
<feature type="chain" id="PRO_0000281623" description="LPS-assembly protein LptD">
    <location>
        <begin position="20"/>
        <end position="748"/>
    </location>
</feature>
<reference key="1">
    <citation type="journal article" date="2005" name="Genome Res.">
        <title>Coping with cold: the genome of the versatile marine Antarctica bacterium Pseudoalteromonas haloplanktis TAC125.</title>
        <authorList>
            <person name="Medigue C."/>
            <person name="Krin E."/>
            <person name="Pascal G."/>
            <person name="Barbe V."/>
            <person name="Bernsel A."/>
            <person name="Bertin P.N."/>
            <person name="Cheung F."/>
            <person name="Cruveiller S."/>
            <person name="D'Amico S."/>
            <person name="Duilio A."/>
            <person name="Fang G."/>
            <person name="Feller G."/>
            <person name="Ho C."/>
            <person name="Mangenot S."/>
            <person name="Marino G."/>
            <person name="Nilsson J."/>
            <person name="Parrilli E."/>
            <person name="Rocha E.P.C."/>
            <person name="Rouy Z."/>
            <person name="Sekowska A."/>
            <person name="Tutino M.L."/>
            <person name="Vallenet D."/>
            <person name="von Heijne G."/>
            <person name="Danchin A."/>
        </authorList>
    </citation>
    <scope>NUCLEOTIDE SEQUENCE [LARGE SCALE GENOMIC DNA]</scope>
    <source>
        <strain>TAC 125</strain>
    </source>
</reference>
<evidence type="ECO:0000255" key="1">
    <source>
        <dbReference type="HAMAP-Rule" id="MF_01411"/>
    </source>
</evidence>
<evidence type="ECO:0000305" key="2"/>
<comment type="function">
    <text evidence="1">Together with LptE, is involved in the assembly of lipopolysaccharide (LPS) at the surface of the outer membrane.</text>
</comment>
<comment type="subunit">
    <text evidence="1">Component of the lipopolysaccharide transport and assembly complex. Interacts with LptE and LptA.</text>
</comment>
<comment type="subcellular location">
    <subcellularLocation>
        <location evidence="1">Cell outer membrane</location>
    </subcellularLocation>
</comment>
<comment type="similarity">
    <text evidence="1">Belongs to the LptD family.</text>
</comment>
<comment type="sequence caution" evidence="2">
    <conflict type="erroneous initiation">
        <sequence resource="EMBL-CDS" id="CAI87680"/>
    </conflict>
</comment>
<sequence>MSKTWGILMLSVLSAPSLAETELTHKFCGTSMQTRAWQPLPGLKLGMVDIRANDVELLGTQSAEFTGNVDINTVNMSLSAQTALIDKQRGLLNATGPITYRDKISEVNSTGLNADLNNSAISLLGAQYSLTQQLGKGGAEKLTVDESGLMLMNASFTACPGEVPVWAIEADEINLSREEGWGETYNAVLRILDTPVLYLPYFTFPLDERRKSGLLTPSFSSSDRYGLETITPYYWNIAPNLDATITPRYMSRKGLQLQTEFRYLTQEHEGLVGIEYLNKDDSDPDLGDRYMFHWQQKSYLGENWRANVDITNVSDDNYLTDLDSNYASKTDTQLYRTGSLTHMGDTWRTDITVQNFEVLGDHLESYTALPQISFTQTAPWQYDNFDFSVSGEVSHFTNSSAIIDQATRIHIEPKARFDYKEHAWSFLSEVSILQTNYKQHGDLEGTQYSESVSRTLPKVRLYTQLNFERETSYFIDDGIQTLEPQLQYLYTPNEDQSDIGLFDTAKLQDDFFGLFRDTRFSGVDRIAAANQFTLGATTRLFDKKHQEVFNFSAGQIFYLSDSAKPTEQGLNSDTNYNALFAAQTMVHWHRRWYLSAGIQYDTDGKQIIQSNVTLDYKGDDNELVQLNHRYSDDVSGNAIEQTGLFTSIPVSDEWQFIASYHRDLENNRSIEVLSGLQYESCCWAFQITGHRQIVTDLNQSIGQQQATFDSSIRLNFVLKGLGSKSRYDAKKLLQQGIFGYRRPYFLND</sequence>
<keyword id="KW-0998">Cell outer membrane</keyword>
<keyword id="KW-0472">Membrane</keyword>
<keyword id="KW-1185">Reference proteome</keyword>
<keyword id="KW-0732">Signal</keyword>